<name>VPED_ARATH</name>
<protein>
    <recommendedName>
        <fullName evidence="11">Vacuolar-processing enzyme delta-isozyme</fullName>
        <shortName evidence="11">Delta-VPE</shortName>
        <ecNumber evidence="5">3.4.22.34</ecNumber>
    </recommendedName>
    <alternativeName>
        <fullName evidence="12">Asparaginyl endopeptidase delta-VPE</fullName>
    </alternativeName>
</protein>
<accession>Q9LJX8</accession>
<accession>F4JDJ3</accession>
<accession>Q56X37</accession>
<accession>Q8LGK2</accession>
<comment type="function">
    <text evidence="2 8 9 10">Asparagine-specific endopeptidase that may be involved in processing of proteins targeted to vacuoles (By similarity). Probably involved in post-translational proteolysis of seed storage proteins in the protein storage vacuole of developing seeds (PubMed:12417707, PubMed:14688293). Exhibits a caspase-1-like activity in extracellular granules. At the early stage of seed development, required for the formation of the seed coat, by regulating cell death of specific cell layers in inner integument (PubMed:15705955).</text>
</comment>
<comment type="catalytic activity">
    <reaction evidence="5">
        <text>Hydrolysis of proteins and small molecule substrates at -Asn-|-Xaa- bonds.</text>
        <dbReference type="EC" id="3.4.22.34"/>
    </reaction>
</comment>
<comment type="activity regulation">
    <text evidence="10">Strongly inhibited by biotin-YVAD-fmk (a caspase-1 inhibitor) and by Ac-DEVD-fmk.</text>
</comment>
<comment type="subcellular location">
    <subcellularLocation>
        <location evidence="10">Secreted</location>
        <location evidence="10">Extracellular space</location>
    </subcellularLocation>
    <subcellularLocation>
        <location evidence="10">Secreted</location>
        <location evidence="10">Cell wall</location>
    </subcellularLocation>
    <subcellularLocation>
        <location evidence="4">Vacuole</location>
    </subcellularLocation>
    <text evidence="10">Localized to electron-dense structures inside and outside the walls of seed coat cells that undergo cell death.</text>
</comment>
<comment type="tissue specificity">
    <text evidence="8 9 10">Seed specific. Restricted to developing seeds at 7 days after anthesis, and, at lower levels, detected in flowers (PubMed:12417707, PubMed:14688293). Detected in siliques, specifically in seed coats (at protein level) (PubMed:15705955).</text>
</comment>
<comment type="developmental stage">
    <text evidence="10">Specifically and transiently expressed in two cell layers of the seed coat (ii2 and ii3) at an early stage of seed development (at protein level).</text>
</comment>
<comment type="PTM">
    <text evidence="5">Auto-catalytic activation.</text>
</comment>
<comment type="disruption phenotype">
    <text evidence="8 9 10">No macroscopic phenotype, probably due to functional redundancy (PubMed:12417707, PubMed:14688293). In plants lacking all vacuolar-processing enzyme isozymes (e.g. alpha, beta, gamma and delta) shift of storage protein accumulation from normally processed polypeptides to a finite number of prominent alternatively processed polypeptides cleaved at sites other than the conserved Asn residues targeted by VPE (PubMed:14688293). Delayed cell death of the two layers of the seed coat (PubMed:15705955).</text>
</comment>
<comment type="similarity">
    <text evidence="12">Belongs to the peptidase C13 family.</text>
</comment>
<reference key="1">
    <citation type="journal article" date="2002" name="Plant Cell">
        <title>Redundant proteolytic mechanisms process seed storage proteins in the absence of seed-type members of the vacuolar processing enzyme family of cysteine proteases.</title>
        <authorList>
            <person name="Gruis D.F."/>
            <person name="Selinger D.A."/>
            <person name="Curran J.M."/>
            <person name="Jung R."/>
        </authorList>
    </citation>
    <scope>NUCLEOTIDE SEQUENCE [MRNA]</scope>
    <scope>FUNCTION</scope>
    <scope>DISRUPTION PHENOTYPE</scope>
    <scope>TISSUE SPECIFICITY</scope>
    <source>
        <strain>cv. Columbia</strain>
        <tissue>Green siliques</tissue>
    </source>
</reference>
<reference key="2">
    <citation type="submission" date="2003-03" db="EMBL/GenBank/DDBJ databases">
        <title>Isolation and characterization of delta vacuolar processing enzyme(dVPE) from Arabidopsis thaliana.</title>
        <authorList>
            <person name="Nakaune S."/>
            <person name="Yamada K."/>
            <person name="Mikio N."/>
            <person name="Hara-Nishimura I."/>
        </authorList>
    </citation>
    <scope>NUCLEOTIDE SEQUENCE [MRNA]</scope>
    <source>
        <strain>cv. Columbia</strain>
        <tissue>Green siliques</tissue>
    </source>
</reference>
<reference key="3">
    <citation type="journal article" date="2000" name="DNA Res.">
        <title>Structural analysis of Arabidopsis thaliana chromosome 3. II. Sequence features of the 4,251,695 bp regions covered by 90 P1, TAC and BAC clones.</title>
        <authorList>
            <person name="Kaneko T."/>
            <person name="Katoh T."/>
            <person name="Sato S."/>
            <person name="Nakamura Y."/>
            <person name="Asamizu E."/>
            <person name="Tabata S."/>
        </authorList>
    </citation>
    <scope>NUCLEOTIDE SEQUENCE [LARGE SCALE GENOMIC DNA]</scope>
    <source>
        <strain>cv. Columbia</strain>
    </source>
</reference>
<reference key="4">
    <citation type="journal article" date="2017" name="Plant J.">
        <title>Araport11: a complete reannotation of the Arabidopsis thaliana reference genome.</title>
        <authorList>
            <person name="Cheng C.Y."/>
            <person name="Krishnakumar V."/>
            <person name="Chan A.P."/>
            <person name="Thibaud-Nissen F."/>
            <person name="Schobel S."/>
            <person name="Town C.D."/>
        </authorList>
    </citation>
    <scope>GENOME REANNOTATION</scope>
    <source>
        <strain>cv. Columbia</strain>
    </source>
</reference>
<reference key="5">
    <citation type="journal article" date="2003" name="Science">
        <title>Empirical analysis of transcriptional activity in the Arabidopsis genome.</title>
        <authorList>
            <person name="Yamada K."/>
            <person name="Lim J."/>
            <person name="Dale J.M."/>
            <person name="Chen H."/>
            <person name="Shinn P."/>
            <person name="Palm C.J."/>
            <person name="Southwick A.M."/>
            <person name="Wu H.C."/>
            <person name="Kim C.J."/>
            <person name="Nguyen M."/>
            <person name="Pham P.K."/>
            <person name="Cheuk R.F."/>
            <person name="Karlin-Newmann G."/>
            <person name="Liu S.X."/>
            <person name="Lam B."/>
            <person name="Sakano H."/>
            <person name="Wu T."/>
            <person name="Yu G."/>
            <person name="Miranda M."/>
            <person name="Quach H.L."/>
            <person name="Tripp M."/>
            <person name="Chang C.H."/>
            <person name="Lee J.M."/>
            <person name="Toriumi M.J."/>
            <person name="Chan M.M."/>
            <person name="Tang C.C."/>
            <person name="Onodera C.S."/>
            <person name="Deng J.M."/>
            <person name="Akiyama K."/>
            <person name="Ansari Y."/>
            <person name="Arakawa T."/>
            <person name="Banh J."/>
            <person name="Banno F."/>
            <person name="Bowser L."/>
            <person name="Brooks S.Y."/>
            <person name="Carninci P."/>
            <person name="Chao Q."/>
            <person name="Choy N."/>
            <person name="Enju A."/>
            <person name="Goldsmith A.D."/>
            <person name="Gurjal M."/>
            <person name="Hansen N.F."/>
            <person name="Hayashizaki Y."/>
            <person name="Johnson-Hopson C."/>
            <person name="Hsuan V.W."/>
            <person name="Iida K."/>
            <person name="Karnes M."/>
            <person name="Khan S."/>
            <person name="Koesema E."/>
            <person name="Ishida J."/>
            <person name="Jiang P.X."/>
            <person name="Jones T."/>
            <person name="Kawai J."/>
            <person name="Kamiya A."/>
            <person name="Meyers C."/>
            <person name="Nakajima M."/>
            <person name="Narusaka M."/>
            <person name="Seki M."/>
            <person name="Sakurai T."/>
            <person name="Satou M."/>
            <person name="Tamse R."/>
            <person name="Vaysberg M."/>
            <person name="Wallender E.K."/>
            <person name="Wong C."/>
            <person name="Yamamura Y."/>
            <person name="Yuan S."/>
            <person name="Shinozaki K."/>
            <person name="Davis R.W."/>
            <person name="Theologis A."/>
            <person name="Ecker J.R."/>
        </authorList>
    </citation>
    <scope>NUCLEOTIDE SEQUENCE [LARGE SCALE MRNA]</scope>
    <source>
        <strain>cv. Columbia</strain>
    </source>
</reference>
<reference key="6">
    <citation type="submission" date="2002-03" db="EMBL/GenBank/DDBJ databases">
        <title>Full-length cDNA from Arabidopsis thaliana.</title>
        <authorList>
            <person name="Brover V.V."/>
            <person name="Troukhan M.E."/>
            <person name="Alexandrov N.A."/>
            <person name="Lu Y.-P."/>
            <person name="Flavell R.B."/>
            <person name="Feldmann K.A."/>
        </authorList>
    </citation>
    <scope>NUCLEOTIDE SEQUENCE [LARGE SCALE MRNA]</scope>
</reference>
<reference key="7">
    <citation type="submission" date="2005-03" db="EMBL/GenBank/DDBJ databases">
        <title>Large-scale analysis of RIKEN Arabidopsis full-length (RAFL) cDNAs.</title>
        <authorList>
            <person name="Totoki Y."/>
            <person name="Seki M."/>
            <person name="Ishida J."/>
            <person name="Nakajima M."/>
            <person name="Enju A."/>
            <person name="Kamiya A."/>
            <person name="Narusaka M."/>
            <person name="Shin-i T."/>
            <person name="Nakagawa M."/>
            <person name="Sakamoto N."/>
            <person name="Oishi K."/>
            <person name="Kohara Y."/>
            <person name="Kobayashi M."/>
            <person name="Toyoda A."/>
            <person name="Sakaki Y."/>
            <person name="Sakurai T."/>
            <person name="Iida K."/>
            <person name="Akiyama K."/>
            <person name="Satou M."/>
            <person name="Toyoda T."/>
            <person name="Konagaya A."/>
            <person name="Carninci P."/>
            <person name="Kawai J."/>
            <person name="Hayashizaki Y."/>
            <person name="Shinozaki K."/>
        </authorList>
    </citation>
    <scope>NUCLEOTIDE SEQUENCE [LARGE SCALE MRNA] OF 237-466</scope>
    <source>
        <strain>cv. Columbia</strain>
    </source>
</reference>
<reference key="8">
    <citation type="journal article" date="2004" name="Plant Cell">
        <title>Storage protein accumulation in the absence of the vacuolar processing enzyme family of cysteine proteases.</title>
        <authorList>
            <person name="Gruis D."/>
            <person name="Schulze J."/>
            <person name="Jung R."/>
        </authorList>
    </citation>
    <scope>FUNCTION</scope>
    <scope>DISRUPTION PHENOTYPE</scope>
    <scope>TISSUE SPECIFICITY</scope>
</reference>
<reference key="9">
    <citation type="journal article" date="2005" name="Plant Cell">
        <title>A vacuolar processing enzyme, deltaVPE, is involved in seed coat formation at the early stage of seed development.</title>
        <authorList>
            <person name="Nakaune S."/>
            <person name="Yamada K."/>
            <person name="Kondo M."/>
            <person name="Kato T."/>
            <person name="Tabata S."/>
            <person name="Nishimura M."/>
            <person name="Hara-Nishimura I."/>
        </authorList>
    </citation>
    <scope>FUNCTION</scope>
    <scope>DISRUPTION PHENOTYPE</scope>
    <scope>SUBCELLULAR LOCATION</scope>
    <scope>DEVELOPMENTAL STAGE</scope>
    <scope>TISSUE SPECIFICITY</scope>
    <scope>ACTIVITY REGULATION</scope>
</reference>
<gene>
    <name evidence="11" type="primary">dVPE</name>
    <name evidence="13" type="ordered locus">At3g20210</name>
    <name evidence="14" type="ORF">MAL21.23</name>
</gene>
<sequence>MSSPLGHFQILVFLHALLIFSAESRKTQLLNDNDVESSDKSAKGTRWAVLVAGSNEYYNYRHQADICHAYQILRKGGLKDENIIVFMYDDIAFSSENPRPGVIINKPDGEDVYKGVPKDYTKEAVNVQNFYNVLLGNESGVTGGNGKVVKSGPNDNIFIYYADHGAPGLIAMPTGDEVMAKDFNEVLEKMHKRKKYNKMVIYVEACESGSMFEGILKKNLNIYAVTAANSKESSWGVYCPESYPPPPSEIGTCLGDTFSISWLEDSDLHDMSKETLEQQYHVVKRRVGSDVPETSHVCRFGTEKMLKDYLSSYIGRNPENDNFTFTESFSSPISNSGLVNPRDIPLLYLQRKIQKAPMGSLESKEAQKKLLDEKNHRKQIDQSITDILRLSVKQTNVLNLLTSTRTTGQPLVDDWDCFKTLVNSFKNHCGATVHYGLKYTGALANICNMGVDVKQTVSAIEQACSM</sequence>
<dbReference type="EC" id="3.4.22.34" evidence="5"/>
<dbReference type="EMBL" id="AB105106">
    <property type="protein sequence ID" value="BAC65233.1"/>
    <property type="molecule type" value="mRNA"/>
</dbReference>
<dbReference type="EMBL" id="AF521661">
    <property type="protein sequence ID" value="AAN64910.1"/>
    <property type="molecule type" value="mRNA"/>
</dbReference>
<dbReference type="EMBL" id="AP000383">
    <property type="protein sequence ID" value="BAB01880.1"/>
    <property type="molecule type" value="Genomic_DNA"/>
</dbReference>
<dbReference type="EMBL" id="CP002686">
    <property type="protein sequence ID" value="AEE76347.1"/>
    <property type="molecule type" value="Genomic_DNA"/>
</dbReference>
<dbReference type="EMBL" id="AY120765">
    <property type="protein sequence ID" value="AAM53323.1"/>
    <property type="molecule type" value="mRNA"/>
</dbReference>
<dbReference type="EMBL" id="BT000949">
    <property type="protein sequence ID" value="AAN41349.1"/>
    <property type="molecule type" value="mRNA"/>
</dbReference>
<dbReference type="EMBL" id="AY084227">
    <property type="protein sequence ID" value="AAM60827.1"/>
    <property type="molecule type" value="mRNA"/>
</dbReference>
<dbReference type="EMBL" id="AK221840">
    <property type="protein sequence ID" value="BAD94082.1"/>
    <property type="molecule type" value="mRNA"/>
</dbReference>
<dbReference type="SMR" id="Q9LJX8"/>
<dbReference type="FunCoup" id="Q9LJX8">
    <property type="interactions" value="189"/>
</dbReference>
<dbReference type="STRING" id="3702.Q9LJX8"/>
<dbReference type="MEROPS" id="C13.A01"/>
<dbReference type="GlyCosmos" id="Q9LJX8">
    <property type="glycosylation" value="2 sites, No reported glycans"/>
</dbReference>
<dbReference type="GlyGen" id="Q9LJX8">
    <property type="glycosylation" value="3 sites"/>
</dbReference>
<dbReference type="PaxDb" id="3702-AT3G20210.2"/>
<dbReference type="ProteomicsDB" id="242736"/>
<dbReference type="EnsemblPlants" id="AT3G20210.1">
    <property type="protein sequence ID" value="AT3G20210.1"/>
    <property type="gene ID" value="AT3G20210"/>
</dbReference>
<dbReference type="Gramene" id="AT3G20210.1">
    <property type="protein sequence ID" value="AT3G20210.1"/>
    <property type="gene ID" value="AT3G20210"/>
</dbReference>
<dbReference type="KEGG" id="ath:AT3G20210"/>
<dbReference type="Araport" id="AT3G20210"/>
<dbReference type="TAIR" id="AT3G20210">
    <property type="gene designation" value="DELTA-VPE"/>
</dbReference>
<dbReference type="eggNOG" id="KOG1348">
    <property type="taxonomic scope" value="Eukaryota"/>
</dbReference>
<dbReference type="HOGENOM" id="CLU_024160_0_0_1"/>
<dbReference type="InParanoid" id="Q9LJX8"/>
<dbReference type="OMA" id="GHFQILV"/>
<dbReference type="PhylomeDB" id="Q9LJX8"/>
<dbReference type="PRO" id="PR:Q9LJX8"/>
<dbReference type="Proteomes" id="UP000006548">
    <property type="component" value="Chromosome 3"/>
</dbReference>
<dbReference type="ExpressionAtlas" id="Q9LJX8">
    <property type="expression patterns" value="baseline and differential"/>
</dbReference>
<dbReference type="GO" id="GO:0005615">
    <property type="term" value="C:extracellular space"/>
    <property type="evidence" value="ECO:0000314"/>
    <property type="project" value="TAIR"/>
</dbReference>
<dbReference type="GO" id="GO:0009505">
    <property type="term" value="C:plant-type cell wall"/>
    <property type="evidence" value="ECO:0000314"/>
    <property type="project" value="UniProtKB"/>
</dbReference>
<dbReference type="GO" id="GO:0000326">
    <property type="term" value="C:protein storage vacuole"/>
    <property type="evidence" value="ECO:0000250"/>
    <property type="project" value="UniProtKB"/>
</dbReference>
<dbReference type="GO" id="GO:0004197">
    <property type="term" value="F:cysteine-type endopeptidase activity"/>
    <property type="evidence" value="ECO:0000314"/>
    <property type="project" value="TAIR"/>
</dbReference>
<dbReference type="GO" id="GO:0012501">
    <property type="term" value="P:programmed cell death"/>
    <property type="evidence" value="ECO:0000315"/>
    <property type="project" value="TAIR"/>
</dbReference>
<dbReference type="GO" id="GO:0051603">
    <property type="term" value="P:proteolysis involved in protein catabolic process"/>
    <property type="evidence" value="ECO:0007669"/>
    <property type="project" value="InterPro"/>
</dbReference>
<dbReference type="GO" id="GO:0010214">
    <property type="term" value="P:seed coat development"/>
    <property type="evidence" value="ECO:0000315"/>
    <property type="project" value="TAIR"/>
</dbReference>
<dbReference type="GO" id="GO:0006624">
    <property type="term" value="P:vacuolar protein processing"/>
    <property type="evidence" value="ECO:0000250"/>
    <property type="project" value="TAIR"/>
</dbReference>
<dbReference type="CDD" id="cd21115">
    <property type="entry name" value="legumain_C"/>
    <property type="match status" value="1"/>
</dbReference>
<dbReference type="FunFam" id="1.10.132.130:FF:000001">
    <property type="entry name" value="Vacuolar-processing enzyme beta-isozyme"/>
    <property type="match status" value="1"/>
</dbReference>
<dbReference type="FunFam" id="3.40.50.1460:FF:000005">
    <property type="entry name" value="Vacuolar-processing enzyme beta-isozyme"/>
    <property type="match status" value="1"/>
</dbReference>
<dbReference type="Gene3D" id="1.10.132.130">
    <property type="match status" value="1"/>
</dbReference>
<dbReference type="Gene3D" id="3.40.50.1460">
    <property type="match status" value="1"/>
</dbReference>
<dbReference type="InterPro" id="IPR043577">
    <property type="entry name" value="AE"/>
</dbReference>
<dbReference type="InterPro" id="IPR048501">
    <property type="entry name" value="Legum_prodom"/>
</dbReference>
<dbReference type="InterPro" id="IPR046427">
    <property type="entry name" value="Legumain_prodom_sf"/>
</dbReference>
<dbReference type="InterPro" id="IPR001096">
    <property type="entry name" value="Peptidase_C13"/>
</dbReference>
<dbReference type="PANTHER" id="PTHR12000">
    <property type="entry name" value="HEMOGLOBINASE FAMILY MEMBER"/>
    <property type="match status" value="1"/>
</dbReference>
<dbReference type="PANTHER" id="PTHR12000:SF29">
    <property type="entry name" value="VACUOLAR-PROCESSING ENZYME DELTA-ISOZYME"/>
    <property type="match status" value="1"/>
</dbReference>
<dbReference type="Pfam" id="PF20985">
    <property type="entry name" value="Legum_prodom"/>
    <property type="match status" value="1"/>
</dbReference>
<dbReference type="Pfam" id="PF01650">
    <property type="entry name" value="Peptidase_C13"/>
    <property type="match status" value="1"/>
</dbReference>
<dbReference type="PIRSF" id="PIRSF500139">
    <property type="entry name" value="AE"/>
    <property type="match status" value="1"/>
</dbReference>
<dbReference type="PIRSF" id="PIRSF019663">
    <property type="entry name" value="Legumain"/>
    <property type="match status" value="1"/>
</dbReference>
<dbReference type="PRINTS" id="PR00776">
    <property type="entry name" value="HEMOGLOBNASE"/>
</dbReference>
<feature type="signal peptide" evidence="6">
    <location>
        <begin position="1"/>
        <end position="24"/>
    </location>
</feature>
<feature type="chain" id="PRO_0000431976" description="Vacuolar-processing enzyme delta-isozyme" evidence="6">
    <location>
        <begin position="25"/>
        <end position="466"/>
    </location>
</feature>
<feature type="active site" evidence="1">
    <location>
        <position position="164"/>
    </location>
</feature>
<feature type="active site" description="Nucleophile" evidence="1">
    <location>
        <position position="206"/>
    </location>
</feature>
<feature type="site" description="Required for post-translational maturation and enzyme activity" evidence="5">
    <location>
        <position position="253"/>
    </location>
</feature>
<feature type="glycosylation site" description="N-linked (GlcNAc...) asparagine" evidence="7">
    <location>
        <position position="137"/>
    </location>
</feature>
<feature type="glycosylation site" description="N-linked (GlcNAc...) asparagine" evidence="7">
    <location>
        <position position="322"/>
    </location>
</feature>
<feature type="disulfide bond" evidence="3">
    <location>
        <begin position="239"/>
        <end position="253"/>
    </location>
</feature>
<feature type="disulfide bond" evidence="3">
    <location>
        <begin position="417"/>
        <end position="447"/>
    </location>
</feature>
<feature type="disulfide bond" evidence="3">
    <location>
        <begin position="429"/>
        <end position="464"/>
    </location>
</feature>
<feature type="sequence conflict" description="In Ref. 6; AAM60827." evidence="12" ref="6">
    <original>K</original>
    <variation>I</variation>
    <location>
        <position position="195"/>
    </location>
</feature>
<keyword id="KW-0134">Cell wall</keyword>
<keyword id="KW-1015">Disulfide bond</keyword>
<keyword id="KW-0325">Glycoprotein</keyword>
<keyword id="KW-0378">Hydrolase</keyword>
<keyword id="KW-0645">Protease</keyword>
<keyword id="KW-1185">Reference proteome</keyword>
<keyword id="KW-0964">Secreted</keyword>
<keyword id="KW-0732">Signal</keyword>
<keyword id="KW-0788">Thiol protease</keyword>
<keyword id="KW-0926">Vacuole</keyword>
<proteinExistence type="evidence at protein level"/>
<organism evidence="15">
    <name type="scientific">Arabidopsis thaliana</name>
    <name type="common">Mouse-ear cress</name>
    <dbReference type="NCBI Taxonomy" id="3702"/>
    <lineage>
        <taxon>Eukaryota</taxon>
        <taxon>Viridiplantae</taxon>
        <taxon>Streptophyta</taxon>
        <taxon>Embryophyta</taxon>
        <taxon>Tracheophyta</taxon>
        <taxon>Spermatophyta</taxon>
        <taxon>Magnoliopsida</taxon>
        <taxon>eudicotyledons</taxon>
        <taxon>Gunneridae</taxon>
        <taxon>Pentapetalae</taxon>
        <taxon>rosids</taxon>
        <taxon>malvids</taxon>
        <taxon>Brassicales</taxon>
        <taxon>Brassicaceae</taxon>
        <taxon>Camelineae</taxon>
        <taxon>Arabidopsis</taxon>
    </lineage>
</organism>
<evidence type="ECO:0000250" key="1">
    <source>
        <dbReference type="UniProtKB" id="O89017"/>
    </source>
</evidence>
<evidence type="ECO:0000250" key="2">
    <source>
        <dbReference type="UniProtKB" id="P49043"/>
    </source>
</evidence>
<evidence type="ECO:0000250" key="3">
    <source>
        <dbReference type="UniProtKB" id="P49046"/>
    </source>
</evidence>
<evidence type="ECO:0000250" key="4">
    <source>
        <dbReference type="UniProtKB" id="Q39119"/>
    </source>
</evidence>
<evidence type="ECO:0000250" key="5">
    <source>
        <dbReference type="UniProtKB" id="Q84LM2"/>
    </source>
</evidence>
<evidence type="ECO:0000255" key="6"/>
<evidence type="ECO:0000255" key="7">
    <source>
        <dbReference type="PROSITE-ProRule" id="PRU00498"/>
    </source>
</evidence>
<evidence type="ECO:0000269" key="8">
    <source>
    </source>
</evidence>
<evidence type="ECO:0000269" key="9">
    <source>
    </source>
</evidence>
<evidence type="ECO:0000269" key="10">
    <source>
    </source>
</evidence>
<evidence type="ECO:0000303" key="11">
    <source>
    </source>
</evidence>
<evidence type="ECO:0000305" key="12"/>
<evidence type="ECO:0000312" key="13">
    <source>
        <dbReference type="Araport" id="AT3G20210"/>
    </source>
</evidence>
<evidence type="ECO:0000312" key="14">
    <source>
        <dbReference type="EMBL" id="BAB01880.1"/>
    </source>
</evidence>
<evidence type="ECO:0000312" key="15">
    <source>
        <dbReference type="Proteomes" id="UP000006548"/>
    </source>
</evidence>